<reference key="1">
    <citation type="journal article" date="1986" name="Biochimie">
        <title>Isolation of actin genes in Bombyx mori: the coding sequence of a cytoplasmic actin gene expressed in the silk gland is interrupted by a single intron in an unusual position.</title>
        <authorList>
            <person name="Mounier N."/>
            <person name="Prudhomme J.-C."/>
        </authorList>
    </citation>
    <scope>NUCLEOTIDE SEQUENCE [GENOMIC DNA]</scope>
    <source>
        <strain>European 200 X 300</strain>
    </source>
</reference>
<reference key="2">
    <citation type="journal article" date="1997" name="J. Mol. Biol.">
        <title>A strong inhibitory element down-regulates SRE-stimulated transcription of the A3 cytoplasmic actin gene of Bombyx mori.</title>
        <authorList>
            <person name="Mange A."/>
            <person name="Julien E."/>
            <person name="Prudhomme J.-C."/>
            <person name="Couble P."/>
        </authorList>
    </citation>
    <scope>NUCLEOTIDE SEQUENCE [GENOMIC DNA]</scope>
    <source>
        <strain>European 200 X 300</strain>
    </source>
</reference>
<keyword id="KW-0007">Acetylation</keyword>
<keyword id="KW-0067">ATP-binding</keyword>
<keyword id="KW-0963">Cytoplasm</keyword>
<keyword id="KW-0206">Cytoskeleton</keyword>
<keyword id="KW-0378">Hydrolase</keyword>
<keyword id="KW-0488">Methylation</keyword>
<keyword id="KW-0547">Nucleotide-binding</keyword>
<keyword id="KW-0558">Oxidation</keyword>
<keyword id="KW-1185">Reference proteome</keyword>
<name>ACT3_BOMMO</name>
<proteinExistence type="inferred from homology"/>
<comment type="function">
    <text>Actins are highly conserved proteins that are involved in various types of cell motility and are ubiquitously expressed in all eukaryotic cells.</text>
</comment>
<comment type="function">
    <text>Multiple isoforms are involved in various cellular functions such as cytoskeleton structure, cell mobility, chromosome movement and muscle contraction.</text>
</comment>
<comment type="catalytic activity">
    <reaction evidence="6">
        <text>ATP + H2O = ADP + phosphate + H(+)</text>
        <dbReference type="Rhea" id="RHEA:13065"/>
        <dbReference type="ChEBI" id="CHEBI:15377"/>
        <dbReference type="ChEBI" id="CHEBI:15378"/>
        <dbReference type="ChEBI" id="CHEBI:30616"/>
        <dbReference type="ChEBI" id="CHEBI:43474"/>
        <dbReference type="ChEBI" id="CHEBI:456216"/>
    </reaction>
</comment>
<comment type="subcellular location">
    <subcellularLocation>
        <location>Cytoplasm</location>
        <location>Cytoskeleton</location>
    </subcellularLocation>
</comment>
<comment type="PTM">
    <text evidence="4">Oxidation of Met-45 and Met-48 by MICALs (MICAL1, MICAL2 or MICAL3) to form methionine sulfoxide promotes actin filament depolymerization. MICAL1 and MICAL2 produce the (R)-S-oxide form. The (R)-S-oxide form is reverted by MSRB1 and MSRB2, which promotes actin repolymerization.</text>
</comment>
<comment type="PTM">
    <text evidence="3">Monomethylation at Lys-85 (K85me1) regulates actin-myosin interaction and actomyosin-dependent processes. Demethylation by ALKBH4 is required for maintaining actomyosin dynamics supporting normal cleavage furrow ingression during cytokinesis and cell migration.</text>
</comment>
<comment type="miscellaneous">
    <text>There are at least 5 different actin genes in this organism.</text>
</comment>
<comment type="similarity">
    <text evidence="7">Belongs to the actin family.</text>
</comment>
<sequence length="376" mass="41918">MCDEEVAALVVDNGSGMCKAGFAGDDAPRAVFPSIVGRPRHQGVMVGMGQKDSYVGDEAQSKRGILTLKYPIEHGIVTNWDDMEKIWHHTFYNELRVAPEEHPVLLTEAPLNPKANREKMTQIMFETFNTPAMYVAIQAVLSLYASGRTTGIVLDSGDGVSHTVPIYEGYALPHAILRLDLAGRDLTDYLMKILTERGYSFTTTAEREIVRDIKEKLCYVALDFEQEMATAASSSSLEKSYELPDGQVITIGNERFRCPEALFQPSFLGMEANGIHETTYNSIMKCDVDIRKDLYANTVLSGGTTMYPGIADRMQKEITRLAPSTMKIKIIAPPERKYSVWIGGSILASLSTFQQMWISKQEYDESGPSIVHRKCF</sequence>
<dbReference type="EC" id="3.6.4.-" evidence="6"/>
<dbReference type="EMBL" id="X04507">
    <property type="protein sequence ID" value="CAA28192.1"/>
    <property type="status" value="ALT_SEQ"/>
    <property type="molecule type" value="Genomic_DNA"/>
</dbReference>
<dbReference type="EMBL" id="U49854">
    <property type="protein sequence ID" value="AAC47446.1"/>
    <property type="molecule type" value="Genomic_DNA"/>
</dbReference>
<dbReference type="PIR" id="A25135">
    <property type="entry name" value="A25135"/>
</dbReference>
<dbReference type="RefSeq" id="NP_001119726.1">
    <property type="nucleotide sequence ID" value="NM_001126254.1"/>
</dbReference>
<dbReference type="SMR" id="P04829"/>
<dbReference type="STRING" id="7091.P04829"/>
<dbReference type="EnsemblMetazoa" id="NM_001126254.1">
    <property type="protein sequence ID" value="NP_001119726.1"/>
    <property type="gene ID" value="GeneID_100145915"/>
</dbReference>
<dbReference type="GeneID" id="100145915"/>
<dbReference type="KEGG" id="bmor:100145915"/>
<dbReference type="CTD" id="5657641"/>
<dbReference type="HOGENOM" id="CLU_027965_0_2_1"/>
<dbReference type="InParanoid" id="P04829"/>
<dbReference type="OrthoDB" id="129748at7088"/>
<dbReference type="Proteomes" id="UP000005204">
    <property type="component" value="Unassembled WGS sequence"/>
</dbReference>
<dbReference type="GO" id="GO:0005737">
    <property type="term" value="C:cytoplasm"/>
    <property type="evidence" value="ECO:0007669"/>
    <property type="project" value="UniProtKB-KW"/>
</dbReference>
<dbReference type="GO" id="GO:0005856">
    <property type="term" value="C:cytoskeleton"/>
    <property type="evidence" value="ECO:0007669"/>
    <property type="project" value="UniProtKB-SubCell"/>
</dbReference>
<dbReference type="GO" id="GO:0005524">
    <property type="term" value="F:ATP binding"/>
    <property type="evidence" value="ECO:0007669"/>
    <property type="project" value="UniProtKB-KW"/>
</dbReference>
<dbReference type="GO" id="GO:0016787">
    <property type="term" value="F:hydrolase activity"/>
    <property type="evidence" value="ECO:0007669"/>
    <property type="project" value="UniProtKB-KW"/>
</dbReference>
<dbReference type="CDD" id="cd10224">
    <property type="entry name" value="ASKHA_NBD_actin"/>
    <property type="match status" value="1"/>
</dbReference>
<dbReference type="FunFam" id="2.30.36.70:FF:000001">
    <property type="entry name" value="Actin, alpha skeletal muscle"/>
    <property type="match status" value="1"/>
</dbReference>
<dbReference type="FunFam" id="3.30.420.40:FF:000131">
    <property type="entry name" value="Actin, alpha skeletal muscle"/>
    <property type="match status" value="1"/>
</dbReference>
<dbReference type="FunFam" id="3.30.420.40:FF:000291">
    <property type="entry name" value="Actin, alpha skeletal muscle"/>
    <property type="match status" value="1"/>
</dbReference>
<dbReference type="FunFam" id="3.90.640.10:FF:000047">
    <property type="entry name" value="Actin, alpha skeletal muscle"/>
    <property type="match status" value="1"/>
</dbReference>
<dbReference type="FunFam" id="3.30.420.40:FF:000058">
    <property type="entry name" value="Putative actin-related protein 5"/>
    <property type="match status" value="1"/>
</dbReference>
<dbReference type="Gene3D" id="3.30.420.40">
    <property type="match status" value="2"/>
</dbReference>
<dbReference type="Gene3D" id="3.90.640.10">
    <property type="entry name" value="Actin, Chain A, domain 4"/>
    <property type="match status" value="1"/>
</dbReference>
<dbReference type="InterPro" id="IPR004000">
    <property type="entry name" value="Actin"/>
</dbReference>
<dbReference type="InterPro" id="IPR020902">
    <property type="entry name" value="Actin/actin-like_CS"/>
</dbReference>
<dbReference type="InterPro" id="IPR004001">
    <property type="entry name" value="Actin_CS"/>
</dbReference>
<dbReference type="InterPro" id="IPR043129">
    <property type="entry name" value="ATPase_NBD"/>
</dbReference>
<dbReference type="PANTHER" id="PTHR11937">
    <property type="entry name" value="ACTIN"/>
    <property type="match status" value="1"/>
</dbReference>
<dbReference type="Pfam" id="PF00022">
    <property type="entry name" value="Actin"/>
    <property type="match status" value="1"/>
</dbReference>
<dbReference type="PRINTS" id="PR00190">
    <property type="entry name" value="ACTIN"/>
</dbReference>
<dbReference type="SMART" id="SM00268">
    <property type="entry name" value="ACTIN"/>
    <property type="match status" value="1"/>
</dbReference>
<dbReference type="SUPFAM" id="SSF53067">
    <property type="entry name" value="Actin-like ATPase domain"/>
    <property type="match status" value="2"/>
</dbReference>
<dbReference type="PROSITE" id="PS00406">
    <property type="entry name" value="ACTINS_1"/>
    <property type="match status" value="1"/>
</dbReference>
<dbReference type="PROSITE" id="PS00432">
    <property type="entry name" value="ACTINS_2"/>
    <property type="match status" value="1"/>
</dbReference>
<dbReference type="PROSITE" id="PS01132">
    <property type="entry name" value="ACTINS_ACT_LIKE"/>
    <property type="match status" value="1"/>
</dbReference>
<organism>
    <name type="scientific">Bombyx mori</name>
    <name type="common">Silk moth</name>
    <dbReference type="NCBI Taxonomy" id="7091"/>
    <lineage>
        <taxon>Eukaryota</taxon>
        <taxon>Metazoa</taxon>
        <taxon>Ecdysozoa</taxon>
        <taxon>Arthropoda</taxon>
        <taxon>Hexapoda</taxon>
        <taxon>Insecta</taxon>
        <taxon>Pterygota</taxon>
        <taxon>Neoptera</taxon>
        <taxon>Endopterygota</taxon>
        <taxon>Lepidoptera</taxon>
        <taxon>Glossata</taxon>
        <taxon>Ditrysia</taxon>
        <taxon>Bombycoidea</taxon>
        <taxon>Bombycidae</taxon>
        <taxon>Bombycinae</taxon>
        <taxon>Bombyx</taxon>
    </lineage>
</organism>
<protein>
    <recommendedName>
        <fullName>Actin, cytoplasmic A3</fullName>
        <ecNumber evidence="6">3.6.4.-</ecNumber>
    </recommendedName>
    <component>
        <recommendedName>
            <fullName>Actin, cytoplasmic A3, intermediate form</fullName>
        </recommendedName>
    </component>
</protein>
<accession>P04829</accession>
<accession>P90694</accession>
<evidence type="ECO:0000250" key="1">
    <source>
        <dbReference type="UniProtKB" id="P62737"/>
    </source>
</evidence>
<evidence type="ECO:0000250" key="2">
    <source>
        <dbReference type="UniProtKB" id="P62739"/>
    </source>
</evidence>
<evidence type="ECO:0000250" key="3">
    <source>
        <dbReference type="UniProtKB" id="P68032"/>
    </source>
</evidence>
<evidence type="ECO:0000250" key="4">
    <source>
        <dbReference type="UniProtKB" id="P68033"/>
    </source>
</evidence>
<evidence type="ECO:0000250" key="5">
    <source>
        <dbReference type="UniProtKB" id="P68135"/>
    </source>
</evidence>
<evidence type="ECO:0000250" key="6">
    <source>
        <dbReference type="UniProtKB" id="P68137"/>
    </source>
</evidence>
<evidence type="ECO:0000305" key="7"/>
<feature type="initiator methionine" description="Removed">
    <location>
        <position position="1"/>
    </location>
</feature>
<feature type="chain" id="PRO_0000443010" description="Actin, cytoplasmic A3, intermediate form" evidence="1">
    <location>
        <begin position="2"/>
        <end position="376"/>
    </location>
</feature>
<feature type="chain" id="PRO_0000000637" description="Actin, cytoplasmic A3" evidence="5">
    <location>
        <begin position="3"/>
        <end position="376"/>
    </location>
</feature>
<feature type="modified residue" description="N-acetylcysteine; in intermediate form" evidence="1">
    <location>
        <position position="2"/>
    </location>
</feature>
<feature type="modified residue" description="N-acetylaspartate; in Actin, cytoplasmic A3" evidence="5">
    <location>
        <position position="3"/>
    </location>
</feature>
<feature type="modified residue" description="Methionine (R)-sulfoxide" evidence="4">
    <location>
        <position position="45"/>
    </location>
</feature>
<feature type="modified residue" description="Methionine (R)-sulfoxide" evidence="4">
    <location>
        <position position="48"/>
    </location>
</feature>
<feature type="modified residue" description="Tele-methylhistidine" evidence="2">
    <location>
        <position position="74"/>
    </location>
</feature>
<feature type="modified residue" description="N6-methyllysine" evidence="3">
    <location>
        <position position="85"/>
    </location>
</feature>
<feature type="sequence conflict" description="In Ref. 1; CAA28192." evidence="7" ref="1">
    <original>V</original>
    <variation>L</variation>
    <location>
        <position position="44"/>
    </location>
</feature>